<name>DER_BARQU</name>
<dbReference type="EMBL" id="BX897700">
    <property type="protein sequence ID" value="CAF25811.1"/>
    <property type="molecule type" value="Genomic_DNA"/>
</dbReference>
<dbReference type="RefSeq" id="WP_011179108.1">
    <property type="nucleotide sequence ID" value="NC_005955.1"/>
</dbReference>
<dbReference type="SMR" id="Q6G0H5"/>
<dbReference type="KEGG" id="bqu:BQ03110"/>
<dbReference type="eggNOG" id="COG1160">
    <property type="taxonomic scope" value="Bacteria"/>
</dbReference>
<dbReference type="HOGENOM" id="CLU_016077_5_0_5"/>
<dbReference type="OrthoDB" id="9805918at2"/>
<dbReference type="Proteomes" id="UP000000597">
    <property type="component" value="Chromosome"/>
</dbReference>
<dbReference type="GO" id="GO:0005525">
    <property type="term" value="F:GTP binding"/>
    <property type="evidence" value="ECO:0007669"/>
    <property type="project" value="UniProtKB-UniRule"/>
</dbReference>
<dbReference type="GO" id="GO:0042254">
    <property type="term" value="P:ribosome biogenesis"/>
    <property type="evidence" value="ECO:0007669"/>
    <property type="project" value="UniProtKB-KW"/>
</dbReference>
<dbReference type="CDD" id="cd01894">
    <property type="entry name" value="EngA1"/>
    <property type="match status" value="1"/>
</dbReference>
<dbReference type="CDD" id="cd01895">
    <property type="entry name" value="EngA2"/>
    <property type="match status" value="1"/>
</dbReference>
<dbReference type="FunFam" id="3.30.300.20:FF:000004">
    <property type="entry name" value="GTPase Der"/>
    <property type="match status" value="1"/>
</dbReference>
<dbReference type="Gene3D" id="3.30.300.20">
    <property type="match status" value="1"/>
</dbReference>
<dbReference type="Gene3D" id="3.40.50.300">
    <property type="entry name" value="P-loop containing nucleotide triphosphate hydrolases"/>
    <property type="match status" value="2"/>
</dbReference>
<dbReference type="HAMAP" id="MF_00195">
    <property type="entry name" value="GTPase_Der"/>
    <property type="match status" value="1"/>
</dbReference>
<dbReference type="InterPro" id="IPR031166">
    <property type="entry name" value="G_ENGA"/>
</dbReference>
<dbReference type="InterPro" id="IPR006073">
    <property type="entry name" value="GTP-bd"/>
</dbReference>
<dbReference type="InterPro" id="IPR016484">
    <property type="entry name" value="GTPase_Der"/>
</dbReference>
<dbReference type="InterPro" id="IPR032859">
    <property type="entry name" value="KH_dom-like"/>
</dbReference>
<dbReference type="InterPro" id="IPR015946">
    <property type="entry name" value="KH_dom-like_a/b"/>
</dbReference>
<dbReference type="InterPro" id="IPR027417">
    <property type="entry name" value="P-loop_NTPase"/>
</dbReference>
<dbReference type="InterPro" id="IPR005225">
    <property type="entry name" value="Small_GTP-bd"/>
</dbReference>
<dbReference type="NCBIfam" id="TIGR03594">
    <property type="entry name" value="GTPase_EngA"/>
    <property type="match status" value="1"/>
</dbReference>
<dbReference type="NCBIfam" id="TIGR00231">
    <property type="entry name" value="small_GTP"/>
    <property type="match status" value="2"/>
</dbReference>
<dbReference type="PANTHER" id="PTHR43834">
    <property type="entry name" value="GTPASE DER"/>
    <property type="match status" value="1"/>
</dbReference>
<dbReference type="PANTHER" id="PTHR43834:SF6">
    <property type="entry name" value="GTPASE DER"/>
    <property type="match status" value="1"/>
</dbReference>
<dbReference type="Pfam" id="PF14714">
    <property type="entry name" value="KH_dom-like"/>
    <property type="match status" value="1"/>
</dbReference>
<dbReference type="Pfam" id="PF01926">
    <property type="entry name" value="MMR_HSR1"/>
    <property type="match status" value="2"/>
</dbReference>
<dbReference type="PIRSF" id="PIRSF006485">
    <property type="entry name" value="GTP-binding_EngA"/>
    <property type="match status" value="1"/>
</dbReference>
<dbReference type="SUPFAM" id="SSF52540">
    <property type="entry name" value="P-loop containing nucleoside triphosphate hydrolases"/>
    <property type="match status" value="2"/>
</dbReference>
<dbReference type="PROSITE" id="PS51712">
    <property type="entry name" value="G_ENGA"/>
    <property type="match status" value="2"/>
</dbReference>
<sequence length="477" mass="52808">MSLTIAVVGRPNVGKSTLFNRLVGQKLALVCDKPGVTRDRRIHAAELQDLCFDVIDTAGLEEAGDHTLEGRMCSHTKAAINEADLILFMFDAKSGITPSDLNFASLVRKSGKPIVLVANKSESKAAVGVEYEAWSLGLGEPCPISAEHGLGLSDLRDAIMDAIGKERVFESKNAEKCVSVQSASVGDYVDDLEEKGSVCDESKQPLRIAVAGRPNTGKSTLINRMLGQDRLLTGPEAGLTRDSISVDWEWRGRHIKLFDTAGLRRKSKIQEKLEKLSVADTLRAIRFAEVVVIVFDATAPFEKQDLQIADLVIREGRVPIIAFNKWDLIENNSQVTLANLHEKCAHLLPQVPGLRAVPLSGQYGQGIDNLMENVMMMHRMWNRRISTAKLNRWLETIVAHHPPPAIFGRRLKVKYITQVKTRPPGFVISCSRPKTMPQSYLRYLSNGLRNTFDMPGVPIRISLRASDNPFAARSKKK</sequence>
<keyword id="KW-0342">GTP-binding</keyword>
<keyword id="KW-0547">Nucleotide-binding</keyword>
<keyword id="KW-0677">Repeat</keyword>
<keyword id="KW-0690">Ribosome biogenesis</keyword>
<comment type="function">
    <text evidence="1">GTPase that plays an essential role in the late steps of ribosome biogenesis.</text>
</comment>
<comment type="subunit">
    <text evidence="1">Associates with the 50S ribosomal subunit.</text>
</comment>
<comment type="similarity">
    <text evidence="1">Belongs to the TRAFAC class TrmE-Era-EngA-EngB-Septin-like GTPase superfamily. EngA (Der) GTPase family.</text>
</comment>
<reference key="1">
    <citation type="journal article" date="2004" name="Proc. Natl. Acad. Sci. U.S.A.">
        <title>The louse-borne human pathogen Bartonella quintana is a genomic derivative of the zoonotic agent Bartonella henselae.</title>
        <authorList>
            <person name="Alsmark U.C.M."/>
            <person name="Frank A.C."/>
            <person name="Karlberg E.O."/>
            <person name="Legault B.-A."/>
            <person name="Ardell D.H."/>
            <person name="Canbaeck B."/>
            <person name="Eriksson A.-S."/>
            <person name="Naeslund A.K."/>
            <person name="Handley S.A."/>
            <person name="Huvet M."/>
            <person name="La Scola B."/>
            <person name="Holmberg M."/>
            <person name="Andersson S.G.E."/>
        </authorList>
    </citation>
    <scope>NUCLEOTIDE SEQUENCE [LARGE SCALE GENOMIC DNA]</scope>
    <source>
        <strain>Toulouse</strain>
    </source>
</reference>
<accession>Q6G0H5</accession>
<organism>
    <name type="scientific">Bartonella quintana (strain Toulouse)</name>
    <name type="common">Rochalimaea quintana</name>
    <dbReference type="NCBI Taxonomy" id="283165"/>
    <lineage>
        <taxon>Bacteria</taxon>
        <taxon>Pseudomonadati</taxon>
        <taxon>Pseudomonadota</taxon>
        <taxon>Alphaproteobacteria</taxon>
        <taxon>Hyphomicrobiales</taxon>
        <taxon>Bartonellaceae</taxon>
        <taxon>Bartonella</taxon>
    </lineage>
</organism>
<proteinExistence type="inferred from homology"/>
<feature type="chain" id="PRO_1000011569" description="GTPase Der">
    <location>
        <begin position="1"/>
        <end position="477"/>
    </location>
</feature>
<feature type="domain" description="EngA-type G 1">
    <location>
        <begin position="3"/>
        <end position="167"/>
    </location>
</feature>
<feature type="domain" description="EngA-type G 2">
    <location>
        <begin position="206"/>
        <end position="382"/>
    </location>
</feature>
<feature type="domain" description="KH-like" evidence="1">
    <location>
        <begin position="383"/>
        <end position="467"/>
    </location>
</feature>
<feature type="binding site" evidence="1">
    <location>
        <begin position="9"/>
        <end position="16"/>
    </location>
    <ligand>
        <name>GTP</name>
        <dbReference type="ChEBI" id="CHEBI:37565"/>
        <label>1</label>
    </ligand>
</feature>
<feature type="binding site" evidence="1">
    <location>
        <begin position="56"/>
        <end position="60"/>
    </location>
    <ligand>
        <name>GTP</name>
        <dbReference type="ChEBI" id="CHEBI:37565"/>
        <label>1</label>
    </ligand>
</feature>
<feature type="binding site" evidence="1">
    <location>
        <begin position="119"/>
        <end position="122"/>
    </location>
    <ligand>
        <name>GTP</name>
        <dbReference type="ChEBI" id="CHEBI:37565"/>
        <label>1</label>
    </ligand>
</feature>
<feature type="binding site" evidence="1">
    <location>
        <begin position="212"/>
        <end position="219"/>
    </location>
    <ligand>
        <name>GTP</name>
        <dbReference type="ChEBI" id="CHEBI:37565"/>
        <label>2</label>
    </ligand>
</feature>
<feature type="binding site" evidence="1">
    <location>
        <begin position="259"/>
        <end position="263"/>
    </location>
    <ligand>
        <name>GTP</name>
        <dbReference type="ChEBI" id="CHEBI:37565"/>
        <label>2</label>
    </ligand>
</feature>
<feature type="binding site" evidence="1">
    <location>
        <begin position="324"/>
        <end position="327"/>
    </location>
    <ligand>
        <name>GTP</name>
        <dbReference type="ChEBI" id="CHEBI:37565"/>
        <label>2</label>
    </ligand>
</feature>
<evidence type="ECO:0000255" key="1">
    <source>
        <dbReference type="HAMAP-Rule" id="MF_00195"/>
    </source>
</evidence>
<gene>
    <name evidence="1" type="primary">der</name>
    <name type="synonym">engA</name>
    <name type="ordered locus">BQ03110</name>
</gene>
<protein>
    <recommendedName>
        <fullName evidence="1">GTPase Der</fullName>
    </recommendedName>
    <alternativeName>
        <fullName evidence="1">GTP-binding protein EngA</fullName>
    </alternativeName>
</protein>